<sequence>MIQVLLVTICLAVFPYQGSSIILESGNVNDYEVVYPEKVTALPKGAVQQKYEDAMQYEFKVNGEPVVLYLEKNKELFSENYSETHYSLDGREITTYPSVEDHCYYHGRIQNDADSTASISACNGLKGHFKLRGKTYLIEPLKLPNSEAHAVFKYENVEKEDEAPQMCGVTETNWESDLPIKKTSQLNLPLLEKRCIELVMVADHRMYTKYDGDKTEISSKIYEIANNLNVDYRPMKIRVALIGTEIWSTGNLSKVTLSADETLDSFGEWRERDLLKRKSHDNVQLLTGMIFNEKIEGRAYNKSMCDPKRSVGIVRDHRTRPHLVANRMAHGLGHNLGIHHDGDSCSCGANSCIMSATVSNEPSSRFSDCSLNQYSNDIIYNPWTSYCLYNEPSKTDIVSPPVCGNYYLEVGEDCDCGPPANCQNPCCDATTCKLTPGSQCAEGLCCAQCKFIEEGTVCRVAKGDWNDDHCTGQSGDCPWIGYYG</sequence>
<reference key="1">
    <citation type="journal article" date="2007" name="Toxicon">
        <title>Molecular cloning of albolatin, a novel snake venom metalloprotease from green pit viper (Trimeresurus albolabris), and expression of its disintegrin domain.</title>
        <authorList>
            <person name="Singhamatr P."/>
            <person name="Rojnuckarin P."/>
        </authorList>
    </citation>
    <scope>NUCLEOTIDE SEQUENCE [MRNA]</scope>
    <scope>FUNCTION</scope>
    <scope>TISSUE SPECIFICITY</scope>
    <scope>SUBUNIT</scope>
    <source>
        <tissue>Venom gland</tissue>
    </source>
</reference>
<dbReference type="SMR" id="P0C6B6"/>
<dbReference type="MEROPS" id="M12.313"/>
<dbReference type="GO" id="GO:0005576">
    <property type="term" value="C:extracellular region"/>
    <property type="evidence" value="ECO:0007669"/>
    <property type="project" value="UniProtKB-SubCell"/>
</dbReference>
<dbReference type="GO" id="GO:0005886">
    <property type="term" value="C:plasma membrane"/>
    <property type="evidence" value="ECO:0007669"/>
    <property type="project" value="TreeGrafter"/>
</dbReference>
<dbReference type="GO" id="GO:0004222">
    <property type="term" value="F:metalloendopeptidase activity"/>
    <property type="evidence" value="ECO:0007669"/>
    <property type="project" value="InterPro"/>
</dbReference>
<dbReference type="GO" id="GO:0090729">
    <property type="term" value="F:toxin activity"/>
    <property type="evidence" value="ECO:0007669"/>
    <property type="project" value="UniProtKB-KW"/>
</dbReference>
<dbReference type="GO" id="GO:0006508">
    <property type="term" value="P:proteolysis"/>
    <property type="evidence" value="ECO:0007669"/>
    <property type="project" value="InterPro"/>
</dbReference>
<dbReference type="CDD" id="cd04269">
    <property type="entry name" value="ZnMc_adamalysin_II_like"/>
    <property type="match status" value="1"/>
</dbReference>
<dbReference type="FunFam" id="4.10.70.10:FF:000003">
    <property type="entry name" value="Disintegrin and metalloproteinase domain-containing protein 17"/>
    <property type="match status" value="1"/>
</dbReference>
<dbReference type="FunFam" id="3.40.390.10:FF:000002">
    <property type="entry name" value="Disintegrin and metalloproteinase domain-containing protein 22"/>
    <property type="match status" value="1"/>
</dbReference>
<dbReference type="Gene3D" id="3.40.390.10">
    <property type="entry name" value="Collagenase (Catalytic Domain)"/>
    <property type="match status" value="1"/>
</dbReference>
<dbReference type="Gene3D" id="4.10.70.10">
    <property type="entry name" value="Disintegrin domain"/>
    <property type="match status" value="1"/>
</dbReference>
<dbReference type="InterPro" id="IPR018358">
    <property type="entry name" value="Disintegrin_CS"/>
</dbReference>
<dbReference type="InterPro" id="IPR001762">
    <property type="entry name" value="Disintegrin_dom"/>
</dbReference>
<dbReference type="InterPro" id="IPR036436">
    <property type="entry name" value="Disintegrin_dom_sf"/>
</dbReference>
<dbReference type="InterPro" id="IPR024079">
    <property type="entry name" value="MetalloPept_cat_dom_sf"/>
</dbReference>
<dbReference type="InterPro" id="IPR001590">
    <property type="entry name" value="Peptidase_M12B"/>
</dbReference>
<dbReference type="InterPro" id="IPR002870">
    <property type="entry name" value="Peptidase_M12B_N"/>
</dbReference>
<dbReference type="InterPro" id="IPR034027">
    <property type="entry name" value="Reprolysin_adamalysin"/>
</dbReference>
<dbReference type="PANTHER" id="PTHR11905">
    <property type="entry name" value="ADAM A DISINTEGRIN AND METALLOPROTEASE DOMAIN"/>
    <property type="match status" value="1"/>
</dbReference>
<dbReference type="PANTHER" id="PTHR11905:SF32">
    <property type="entry name" value="DISINTEGRIN AND METALLOPROTEINASE DOMAIN-CONTAINING PROTEIN 28"/>
    <property type="match status" value="1"/>
</dbReference>
<dbReference type="Pfam" id="PF00200">
    <property type="entry name" value="Disintegrin"/>
    <property type="match status" value="1"/>
</dbReference>
<dbReference type="Pfam" id="PF01562">
    <property type="entry name" value="Pep_M12B_propep"/>
    <property type="match status" value="1"/>
</dbReference>
<dbReference type="Pfam" id="PF01421">
    <property type="entry name" value="Reprolysin"/>
    <property type="match status" value="1"/>
</dbReference>
<dbReference type="PRINTS" id="PR00289">
    <property type="entry name" value="DISINTEGRIN"/>
</dbReference>
<dbReference type="SMART" id="SM00050">
    <property type="entry name" value="DISIN"/>
    <property type="match status" value="1"/>
</dbReference>
<dbReference type="SUPFAM" id="SSF57552">
    <property type="entry name" value="Blood coagulation inhibitor (disintegrin)"/>
    <property type="match status" value="1"/>
</dbReference>
<dbReference type="SUPFAM" id="SSF55486">
    <property type="entry name" value="Metalloproteases ('zincins'), catalytic domain"/>
    <property type="match status" value="1"/>
</dbReference>
<dbReference type="PROSITE" id="PS50215">
    <property type="entry name" value="ADAM_MEPRO"/>
    <property type="match status" value="1"/>
</dbReference>
<dbReference type="PROSITE" id="PS00427">
    <property type="entry name" value="DISINTEGRIN_1"/>
    <property type="match status" value="1"/>
</dbReference>
<dbReference type="PROSITE" id="PS50214">
    <property type="entry name" value="DISINTEGRIN_2"/>
    <property type="match status" value="1"/>
</dbReference>
<name>VM2AL_TRIAB</name>
<evidence type="ECO:0000250" key="1"/>
<evidence type="ECO:0000250" key="2">
    <source>
        <dbReference type="UniProtKB" id="Q0NZX5"/>
    </source>
</evidence>
<evidence type="ECO:0000255" key="3"/>
<evidence type="ECO:0000255" key="4">
    <source>
        <dbReference type="PROSITE-ProRule" id="PRU00068"/>
    </source>
</evidence>
<evidence type="ECO:0000255" key="5">
    <source>
        <dbReference type="PROSITE-ProRule" id="PRU00276"/>
    </source>
</evidence>
<evidence type="ECO:0000269" key="6">
    <source>
    </source>
</evidence>
<evidence type="ECO:0000305" key="7"/>
<evidence type="ECO:0000305" key="8">
    <source>
    </source>
</evidence>
<proteinExistence type="evidence at protein level"/>
<feature type="signal peptide" evidence="3">
    <location>
        <begin position="1"/>
        <end position="20"/>
    </location>
</feature>
<feature type="propeptide" id="PRO_0000319491" evidence="1">
    <location>
        <begin position="21"/>
        <end position="191"/>
    </location>
</feature>
<feature type="chain" id="PRO_0000319492" description="Zinc metalloproteinase homolog-disintegrin albolatin">
    <location>
        <begin position="192"/>
        <end position="484"/>
    </location>
</feature>
<feature type="domain" description="Peptidase M12B" evidence="5">
    <location>
        <begin position="194"/>
        <end position="392"/>
    </location>
</feature>
<feature type="domain" description="Disintegrin" evidence="4">
    <location>
        <begin position="400"/>
        <end position="484"/>
    </location>
</feature>
<feature type="short sequence motif" description="Cell attachment site; atypical (KGD)">
    <location>
        <begin position="462"/>
        <end position="464"/>
    </location>
</feature>
<feature type="glycosylation site" description="N-linked (GlcNAc...) asparagine" evidence="3">
    <location>
        <position position="80"/>
    </location>
</feature>
<feature type="glycosylation site" description="N-linked (GlcNAc...) asparagine" evidence="3">
    <location>
        <position position="251"/>
    </location>
</feature>
<feature type="glycosylation site" description="N-linked (GlcNAc...) asparagine" evidence="3">
    <location>
        <position position="301"/>
    </location>
</feature>
<feature type="disulfide bond" evidence="5">
    <location>
        <begin position="305"/>
        <end position="387"/>
    </location>
</feature>
<feature type="disulfide bond" evidence="5">
    <location>
        <begin position="345"/>
        <end position="369"/>
    </location>
</feature>
<feature type="disulfide bond" evidence="5">
    <location>
        <begin position="347"/>
        <end position="352"/>
    </location>
</feature>
<feature type="disulfide bond" evidence="7">
    <location>
        <begin position="403"/>
        <end position="422"/>
    </location>
</feature>
<feature type="disulfide bond" evidence="2">
    <location>
        <begin position="414"/>
        <end position="432"/>
    </location>
</feature>
<feature type="disulfide bond" evidence="2">
    <location>
        <begin position="416"/>
        <end position="427"/>
    </location>
</feature>
<feature type="disulfide bond" evidence="2">
    <location>
        <begin position="426"/>
        <end position="449"/>
    </location>
</feature>
<feature type="disulfide bond" evidence="2">
    <location>
        <begin position="440"/>
        <end position="446"/>
    </location>
</feature>
<feature type="disulfide bond" evidence="2">
    <location>
        <begin position="445"/>
        <end position="470"/>
    </location>
</feature>
<feature type="disulfide bond" evidence="2 4">
    <location>
        <begin position="458"/>
        <end position="477"/>
    </location>
</feature>
<keyword id="KW-1217">Cell adhesion impairing toxin</keyword>
<keyword id="KW-1015">Disulfide bond</keyword>
<keyword id="KW-0325">Glycoprotein</keyword>
<keyword id="KW-1199">Hemostasis impairing toxin</keyword>
<keyword id="KW-1201">Platelet aggregation inhibiting toxin</keyword>
<keyword id="KW-0964">Secreted</keyword>
<keyword id="KW-0732">Signal</keyword>
<keyword id="KW-0800">Toxin</keyword>
<protein>
    <recommendedName>
        <fullName>Zinc metalloproteinase homolog-disintegrin albolatin</fullName>
    </recommendedName>
</protein>
<organism>
    <name type="scientific">Trimeresurus albolabris</name>
    <name type="common">White-lipped pit viper</name>
    <name type="synonym">Cryptelytrops albolabris</name>
    <dbReference type="NCBI Taxonomy" id="8765"/>
    <lineage>
        <taxon>Eukaryota</taxon>
        <taxon>Metazoa</taxon>
        <taxon>Chordata</taxon>
        <taxon>Craniata</taxon>
        <taxon>Vertebrata</taxon>
        <taxon>Euteleostomi</taxon>
        <taxon>Lepidosauria</taxon>
        <taxon>Squamata</taxon>
        <taxon>Bifurcata</taxon>
        <taxon>Unidentata</taxon>
        <taxon>Episquamata</taxon>
        <taxon>Toxicofera</taxon>
        <taxon>Serpentes</taxon>
        <taxon>Colubroidea</taxon>
        <taxon>Viperidae</taxon>
        <taxon>Crotalinae</taxon>
        <taxon>Trimeresurus</taxon>
    </lineage>
</organism>
<comment type="function">
    <text evidence="6">The function of this complete protein has not been studied, but it may be similar to the function of the disintegrin domain. A recombinant protein of this domain (409-484) inhibits collagen-induced human platelet aggregation, without having effect on ADP-induced aggregation. It may act either by blocking the binding of fibrinogen to the platelet receptor GPIIb/GPIIIa (ITGA2B/ITGB3) or by blocking the binding of collagen to the integrin alpha-2/beta-1 complex (ITGA2/ITGB1).</text>
</comment>
<comment type="subunit">
    <text evidence="6">Homodimer; disulfide-linked (disintegrin).</text>
</comment>
<comment type="subcellular location">
    <subcellularLocation>
        <location evidence="8">Secreted</location>
    </subcellularLocation>
</comment>
<comment type="tissue specificity">
    <text evidence="6">Expressed by the venom gland.</text>
</comment>
<comment type="miscellaneous">
    <text>The disintegrin belongs to the dimeric disintegrin subfamily.</text>
</comment>
<comment type="similarity">
    <text evidence="7">Belongs to the venom metalloproteinase (M12B) family. P-II subfamily. P-IIb sub-subfamily.</text>
</comment>
<comment type="caution">
    <text evidence="7">The metalloproteinase domain lacks the active site.</text>
</comment>
<accession>P0C6B6</accession>